<dbReference type="EC" id="6.1.1.20" evidence="1"/>
<dbReference type="EMBL" id="AE017197">
    <property type="protein sequence ID" value="AAU03881.1"/>
    <property type="molecule type" value="Genomic_DNA"/>
</dbReference>
<dbReference type="RefSeq" id="WP_011190865.1">
    <property type="nucleotide sequence ID" value="NC_006142.1"/>
</dbReference>
<dbReference type="SMR" id="Q68WW1"/>
<dbReference type="KEGG" id="rty:RT0404"/>
<dbReference type="eggNOG" id="COG0072">
    <property type="taxonomic scope" value="Bacteria"/>
</dbReference>
<dbReference type="eggNOG" id="COG0073">
    <property type="taxonomic scope" value="Bacteria"/>
</dbReference>
<dbReference type="HOGENOM" id="CLU_016891_0_0_5"/>
<dbReference type="OrthoDB" id="9805455at2"/>
<dbReference type="Proteomes" id="UP000000604">
    <property type="component" value="Chromosome"/>
</dbReference>
<dbReference type="GO" id="GO:0009328">
    <property type="term" value="C:phenylalanine-tRNA ligase complex"/>
    <property type="evidence" value="ECO:0007669"/>
    <property type="project" value="TreeGrafter"/>
</dbReference>
<dbReference type="GO" id="GO:0005524">
    <property type="term" value="F:ATP binding"/>
    <property type="evidence" value="ECO:0007669"/>
    <property type="project" value="UniProtKB-UniRule"/>
</dbReference>
<dbReference type="GO" id="GO:0000287">
    <property type="term" value="F:magnesium ion binding"/>
    <property type="evidence" value="ECO:0007669"/>
    <property type="project" value="UniProtKB-UniRule"/>
</dbReference>
<dbReference type="GO" id="GO:0004826">
    <property type="term" value="F:phenylalanine-tRNA ligase activity"/>
    <property type="evidence" value="ECO:0007669"/>
    <property type="project" value="UniProtKB-UniRule"/>
</dbReference>
<dbReference type="GO" id="GO:0000049">
    <property type="term" value="F:tRNA binding"/>
    <property type="evidence" value="ECO:0007669"/>
    <property type="project" value="UniProtKB-KW"/>
</dbReference>
<dbReference type="GO" id="GO:0006432">
    <property type="term" value="P:phenylalanyl-tRNA aminoacylation"/>
    <property type="evidence" value="ECO:0007669"/>
    <property type="project" value="UniProtKB-UniRule"/>
</dbReference>
<dbReference type="CDD" id="cd00769">
    <property type="entry name" value="PheRS_beta_core"/>
    <property type="match status" value="1"/>
</dbReference>
<dbReference type="CDD" id="cd02796">
    <property type="entry name" value="tRNA_bind_bactPheRS"/>
    <property type="match status" value="1"/>
</dbReference>
<dbReference type="FunFam" id="2.40.50.140:FF:000045">
    <property type="entry name" value="Phenylalanine--tRNA ligase beta subunit"/>
    <property type="match status" value="1"/>
</dbReference>
<dbReference type="Gene3D" id="3.30.56.10">
    <property type="match status" value="2"/>
</dbReference>
<dbReference type="Gene3D" id="3.30.930.10">
    <property type="entry name" value="Bira Bifunctional Protein, Domain 2"/>
    <property type="match status" value="1"/>
</dbReference>
<dbReference type="Gene3D" id="3.30.70.380">
    <property type="entry name" value="Ferrodoxin-fold anticodon-binding domain"/>
    <property type="match status" value="1"/>
</dbReference>
<dbReference type="Gene3D" id="2.40.50.140">
    <property type="entry name" value="Nucleic acid-binding proteins"/>
    <property type="match status" value="1"/>
</dbReference>
<dbReference type="Gene3D" id="3.50.40.10">
    <property type="entry name" value="Phenylalanyl-trna Synthetase, Chain B, domain 3"/>
    <property type="match status" value="1"/>
</dbReference>
<dbReference type="HAMAP" id="MF_00283">
    <property type="entry name" value="Phe_tRNA_synth_beta1"/>
    <property type="match status" value="1"/>
</dbReference>
<dbReference type="InterPro" id="IPR045864">
    <property type="entry name" value="aa-tRNA-synth_II/BPL/LPL"/>
</dbReference>
<dbReference type="InterPro" id="IPR005146">
    <property type="entry name" value="B3/B4_tRNA-bd"/>
</dbReference>
<dbReference type="InterPro" id="IPR009061">
    <property type="entry name" value="DNA-bd_dom_put_sf"/>
</dbReference>
<dbReference type="InterPro" id="IPR005121">
    <property type="entry name" value="Fdx_antiC-bd"/>
</dbReference>
<dbReference type="InterPro" id="IPR036690">
    <property type="entry name" value="Fdx_antiC-bd_sf"/>
</dbReference>
<dbReference type="InterPro" id="IPR012340">
    <property type="entry name" value="NA-bd_OB-fold"/>
</dbReference>
<dbReference type="InterPro" id="IPR045060">
    <property type="entry name" value="Phe-tRNA-ligase_IIc_bsu"/>
</dbReference>
<dbReference type="InterPro" id="IPR004532">
    <property type="entry name" value="Phe-tRNA-ligase_IIc_bsu_bact"/>
</dbReference>
<dbReference type="InterPro" id="IPR020825">
    <property type="entry name" value="Phe-tRNA_synthase-like_B3/B4"/>
</dbReference>
<dbReference type="InterPro" id="IPR041616">
    <property type="entry name" value="PheRS_beta_core"/>
</dbReference>
<dbReference type="InterPro" id="IPR002547">
    <property type="entry name" value="tRNA-bd_dom"/>
</dbReference>
<dbReference type="InterPro" id="IPR033714">
    <property type="entry name" value="tRNA_bind_bactPheRS"/>
</dbReference>
<dbReference type="InterPro" id="IPR005147">
    <property type="entry name" value="tRNA_synthase_B5-dom"/>
</dbReference>
<dbReference type="NCBIfam" id="TIGR00472">
    <property type="entry name" value="pheT_bact"/>
    <property type="match status" value="1"/>
</dbReference>
<dbReference type="NCBIfam" id="NF045760">
    <property type="entry name" value="YtpR"/>
    <property type="match status" value="1"/>
</dbReference>
<dbReference type="PANTHER" id="PTHR10947:SF0">
    <property type="entry name" value="PHENYLALANINE--TRNA LIGASE BETA SUBUNIT"/>
    <property type="match status" value="1"/>
</dbReference>
<dbReference type="PANTHER" id="PTHR10947">
    <property type="entry name" value="PHENYLALANYL-TRNA SYNTHETASE BETA CHAIN AND LEUCINE-RICH REPEAT-CONTAINING PROTEIN 47"/>
    <property type="match status" value="1"/>
</dbReference>
<dbReference type="Pfam" id="PF03483">
    <property type="entry name" value="B3_4"/>
    <property type="match status" value="1"/>
</dbReference>
<dbReference type="Pfam" id="PF03484">
    <property type="entry name" value="B5"/>
    <property type="match status" value="1"/>
</dbReference>
<dbReference type="Pfam" id="PF03147">
    <property type="entry name" value="FDX-ACB"/>
    <property type="match status" value="1"/>
</dbReference>
<dbReference type="Pfam" id="PF01588">
    <property type="entry name" value="tRNA_bind"/>
    <property type="match status" value="1"/>
</dbReference>
<dbReference type="Pfam" id="PF17759">
    <property type="entry name" value="tRNA_synthFbeta"/>
    <property type="match status" value="1"/>
</dbReference>
<dbReference type="SMART" id="SM00873">
    <property type="entry name" value="B3_4"/>
    <property type="match status" value="1"/>
</dbReference>
<dbReference type="SMART" id="SM00874">
    <property type="entry name" value="B5"/>
    <property type="match status" value="1"/>
</dbReference>
<dbReference type="SMART" id="SM00896">
    <property type="entry name" value="FDX-ACB"/>
    <property type="match status" value="1"/>
</dbReference>
<dbReference type="SUPFAM" id="SSF54991">
    <property type="entry name" value="Anticodon-binding domain of PheRS"/>
    <property type="match status" value="1"/>
</dbReference>
<dbReference type="SUPFAM" id="SSF55681">
    <property type="entry name" value="Class II aaRS and biotin synthetases"/>
    <property type="match status" value="1"/>
</dbReference>
<dbReference type="SUPFAM" id="SSF50249">
    <property type="entry name" value="Nucleic acid-binding proteins"/>
    <property type="match status" value="1"/>
</dbReference>
<dbReference type="SUPFAM" id="SSF56037">
    <property type="entry name" value="PheT/TilS domain"/>
    <property type="match status" value="1"/>
</dbReference>
<dbReference type="SUPFAM" id="SSF46955">
    <property type="entry name" value="Putative DNA-binding domain"/>
    <property type="match status" value="1"/>
</dbReference>
<dbReference type="PROSITE" id="PS51483">
    <property type="entry name" value="B5"/>
    <property type="match status" value="1"/>
</dbReference>
<dbReference type="PROSITE" id="PS51447">
    <property type="entry name" value="FDX_ACB"/>
    <property type="match status" value="1"/>
</dbReference>
<dbReference type="PROSITE" id="PS50886">
    <property type="entry name" value="TRBD"/>
    <property type="match status" value="1"/>
</dbReference>
<proteinExistence type="inferred from homology"/>
<sequence length="815" mass="91698">MKFTLSWLKQFLEISASVTEIAEALTDIGLEVEEVIDKATELQKFEVAYIRNIKPHPSADKLKLCDVETKNGILQIVCGASNVRADIKVVLANIGIEIPKGNFKIKESIIRGEKSYGMLCSEEELLLSSDSNGIIELPEYAVVGDNFTRYYGLDDPIFVINVTPNRGDVLGVYGIARDLSAKGLGTLKKLELPEIKSTFFSKIKLNVHDKAACPLFTFREIRNLKNKPSPSWLQQLLKNVGIKTISSLVDITNYIAYSFGQPIHVYDADRIYGALSVGRDCNCKVISYKNHEIATAVLKSSNDTANFYAINGKEYLLTENDLTIKDESGIQGLAGIICGAKSSCNDSTINVILEAACFNARLVAASGRRLKIDTESRYRNERNIDRNFTEKALDIATNLILSICGNCEVSEVVKVGEQELQKIPLDFSVYFLEKITGIKLSIKEIEVILNKLGFITDVKGDIIKVIAPSWRHDINILEDIAEEIVRIYGYDKIESIKLPELHQDNNNLREYKRISSFKRILASQGYDEVVTNSFMSSEDAKLFAELKEELFLLNPMSIDENYMRPTVLPNLISIVSKNLARAIKDMAFFEVGPSFINLNTELTYLTAIISGSFNNKNPHSLGRSYDIFDIKGALEQVIEYAGLSLDKCIVANETVLPQYYHPTRAINIRLGKNLLGHFGQIHPKILKYYDINQEIFAFELNITNLPLIKAKFGKRNELKVSDFQANFRDYSFIVNQDHRVGEIISYINNFNKNLVKSVMLFDIYSGDKLPEGKKSISIKIELQADDRTLSETDLNAFSQDLVESISQKFQGTLRE</sequence>
<organism>
    <name type="scientific">Rickettsia typhi (strain ATCC VR-144 / Wilmington)</name>
    <dbReference type="NCBI Taxonomy" id="257363"/>
    <lineage>
        <taxon>Bacteria</taxon>
        <taxon>Pseudomonadati</taxon>
        <taxon>Pseudomonadota</taxon>
        <taxon>Alphaproteobacteria</taxon>
        <taxon>Rickettsiales</taxon>
        <taxon>Rickettsiaceae</taxon>
        <taxon>Rickettsieae</taxon>
        <taxon>Rickettsia</taxon>
        <taxon>typhus group</taxon>
    </lineage>
</organism>
<keyword id="KW-0030">Aminoacyl-tRNA synthetase</keyword>
<keyword id="KW-0067">ATP-binding</keyword>
<keyword id="KW-0963">Cytoplasm</keyword>
<keyword id="KW-0436">Ligase</keyword>
<keyword id="KW-0460">Magnesium</keyword>
<keyword id="KW-0479">Metal-binding</keyword>
<keyword id="KW-0547">Nucleotide-binding</keyword>
<keyword id="KW-0648">Protein biosynthesis</keyword>
<keyword id="KW-0694">RNA-binding</keyword>
<keyword id="KW-0820">tRNA-binding</keyword>
<feature type="chain" id="PRO_0000126941" description="Phenylalanine--tRNA ligase beta subunit">
    <location>
        <begin position="1"/>
        <end position="815"/>
    </location>
</feature>
<feature type="domain" description="tRNA-binding" evidence="1">
    <location>
        <begin position="39"/>
        <end position="148"/>
    </location>
</feature>
<feature type="domain" description="B5" evidence="1">
    <location>
        <begin position="420"/>
        <end position="495"/>
    </location>
</feature>
<feature type="domain" description="FDX-ACB" evidence="1">
    <location>
        <begin position="721"/>
        <end position="814"/>
    </location>
</feature>
<feature type="binding site" evidence="1">
    <location>
        <position position="473"/>
    </location>
    <ligand>
        <name>Mg(2+)</name>
        <dbReference type="ChEBI" id="CHEBI:18420"/>
        <note>shared with alpha subunit</note>
    </ligand>
</feature>
<feature type="binding site" evidence="1">
    <location>
        <position position="479"/>
    </location>
    <ligand>
        <name>Mg(2+)</name>
        <dbReference type="ChEBI" id="CHEBI:18420"/>
        <note>shared with alpha subunit</note>
    </ligand>
</feature>
<feature type="binding site" evidence="1">
    <location>
        <position position="482"/>
    </location>
    <ligand>
        <name>Mg(2+)</name>
        <dbReference type="ChEBI" id="CHEBI:18420"/>
        <note>shared with alpha subunit</note>
    </ligand>
</feature>
<feature type="binding site" evidence="1">
    <location>
        <position position="483"/>
    </location>
    <ligand>
        <name>Mg(2+)</name>
        <dbReference type="ChEBI" id="CHEBI:18420"/>
        <note>shared with alpha subunit</note>
    </ligand>
</feature>
<evidence type="ECO:0000255" key="1">
    <source>
        <dbReference type="HAMAP-Rule" id="MF_00283"/>
    </source>
</evidence>
<name>SYFB_RICTY</name>
<gene>
    <name evidence="1" type="primary">pheT</name>
    <name type="ordered locus">RT0404</name>
</gene>
<comment type="catalytic activity">
    <reaction evidence="1">
        <text>tRNA(Phe) + L-phenylalanine + ATP = L-phenylalanyl-tRNA(Phe) + AMP + diphosphate + H(+)</text>
        <dbReference type="Rhea" id="RHEA:19413"/>
        <dbReference type="Rhea" id="RHEA-COMP:9668"/>
        <dbReference type="Rhea" id="RHEA-COMP:9699"/>
        <dbReference type="ChEBI" id="CHEBI:15378"/>
        <dbReference type="ChEBI" id="CHEBI:30616"/>
        <dbReference type="ChEBI" id="CHEBI:33019"/>
        <dbReference type="ChEBI" id="CHEBI:58095"/>
        <dbReference type="ChEBI" id="CHEBI:78442"/>
        <dbReference type="ChEBI" id="CHEBI:78531"/>
        <dbReference type="ChEBI" id="CHEBI:456215"/>
        <dbReference type="EC" id="6.1.1.20"/>
    </reaction>
</comment>
<comment type="cofactor">
    <cofactor evidence="1">
        <name>Mg(2+)</name>
        <dbReference type="ChEBI" id="CHEBI:18420"/>
    </cofactor>
    <text evidence="1">Binds 2 magnesium ions per tetramer.</text>
</comment>
<comment type="subunit">
    <text evidence="1">Tetramer of two alpha and two beta subunits.</text>
</comment>
<comment type="subcellular location">
    <subcellularLocation>
        <location evidence="1">Cytoplasm</location>
    </subcellularLocation>
</comment>
<comment type="similarity">
    <text evidence="1">Belongs to the phenylalanyl-tRNA synthetase beta subunit family. Type 1 subfamily.</text>
</comment>
<protein>
    <recommendedName>
        <fullName evidence="1">Phenylalanine--tRNA ligase beta subunit</fullName>
        <ecNumber evidence="1">6.1.1.20</ecNumber>
    </recommendedName>
    <alternativeName>
        <fullName evidence="1">Phenylalanyl-tRNA synthetase beta subunit</fullName>
        <shortName evidence="1">PheRS</shortName>
    </alternativeName>
</protein>
<reference key="1">
    <citation type="journal article" date="2004" name="J. Bacteriol.">
        <title>Complete genome sequence of Rickettsia typhi and comparison with sequences of other Rickettsiae.</title>
        <authorList>
            <person name="McLeod M.P."/>
            <person name="Qin X."/>
            <person name="Karpathy S.E."/>
            <person name="Gioia J."/>
            <person name="Highlander S.K."/>
            <person name="Fox G.E."/>
            <person name="McNeill T.Z."/>
            <person name="Jiang H."/>
            <person name="Muzny D."/>
            <person name="Jacob L.S."/>
            <person name="Hawes A.C."/>
            <person name="Sodergren E."/>
            <person name="Gill R."/>
            <person name="Hume J."/>
            <person name="Morgan M."/>
            <person name="Fan G."/>
            <person name="Amin A.G."/>
            <person name="Gibbs R.A."/>
            <person name="Hong C."/>
            <person name="Yu X.-J."/>
            <person name="Walker D.H."/>
            <person name="Weinstock G.M."/>
        </authorList>
    </citation>
    <scope>NUCLEOTIDE SEQUENCE [LARGE SCALE GENOMIC DNA]</scope>
    <source>
        <strain>ATCC VR-144 / Wilmington</strain>
    </source>
</reference>
<accession>Q68WW1</accession>